<gene>
    <name evidence="5 10" type="primary">cla-hy</name>
</gene>
<feature type="chain" id="PRO_0000458871" description="Linoleate hydratase">
    <location>
        <begin position="1"/>
        <end position="569"/>
    </location>
</feature>
<feature type="active site" description="Proton donor" evidence="1">
    <location>
        <position position="205"/>
    </location>
</feature>
<feature type="binding site" evidence="1">
    <location>
        <position position="87"/>
    </location>
    <ligand>
        <name>FAD</name>
        <dbReference type="ChEBI" id="CHEBI:57692"/>
    </ligand>
</feature>
<feature type="binding site" evidence="1">
    <location>
        <position position="254"/>
    </location>
    <ligand>
        <name>FAD</name>
        <dbReference type="ChEBI" id="CHEBI:57692"/>
    </ligand>
</feature>
<feature type="binding site" evidence="1">
    <location>
        <position position="300"/>
    </location>
    <ligand>
        <name>FAD</name>
        <dbReference type="ChEBI" id="CHEBI:57692"/>
    </ligand>
</feature>
<feature type="binding site" evidence="1">
    <location>
        <position position="524"/>
    </location>
    <ligand>
        <name>FAD</name>
        <dbReference type="ChEBI" id="CHEBI:57692"/>
    </ligand>
</feature>
<reference evidence="10" key="1">
    <citation type="journal article" date="2011" name="Biochem. Biophys. Res. Commun.">
        <title>Novel multi-component enzyme machinery in lactic acid bacteria catalyzing C=C double bond migration useful for conjugated fatty acid synthesis.</title>
        <authorList>
            <person name="Kishino S."/>
            <person name="Park S.B."/>
            <person name="Takeuchi M."/>
            <person name="Yokozeki K."/>
            <person name="Shimizu S."/>
            <person name="Ogawa J."/>
        </authorList>
    </citation>
    <scope>NUCLEOTIDE SEQUENCE [GENOMIC DNA]</scope>
    <scope>FUNCTION</scope>
    <scope>PATHWAY</scope>
    <scope>SUBCELLULAR LOCATION</scope>
    <source>
        <strain>AKU 1009a</strain>
    </source>
</reference>
<reference key="2">
    <citation type="journal article" date="2013" name="Proc. Natl. Acad. Sci. U.S.A.">
        <title>Polyunsaturated fatty acid saturation by gut lactic acid bacteria affecting host lipid composition.</title>
        <authorList>
            <person name="Kishino S."/>
            <person name="Takeuchi M."/>
            <person name="Park S.B."/>
            <person name="Hirata A."/>
            <person name="Kitamura N."/>
            <person name="Kunisawa J."/>
            <person name="Kiyono H."/>
            <person name="Iwamoto R."/>
            <person name="Isobe Y."/>
            <person name="Arita M."/>
            <person name="Arai H."/>
            <person name="Ueda K."/>
            <person name="Shima J."/>
            <person name="Takahashi S."/>
            <person name="Yokozeki K."/>
            <person name="Shimizu S."/>
            <person name="Ogawa J."/>
        </authorList>
    </citation>
    <scope>FUNCTION</scope>
    <scope>CATALYTIC ACTIVITY</scope>
    <scope>PATHWAY</scope>
    <source>
        <strain>AKU 1009a</strain>
    </source>
</reference>
<reference key="3">
    <citation type="journal article" date="2015" name="J. Biosci. Bioeng.">
        <title>Characterization of the linoleic acid Delta9 hydratase catalyzing the first step of polyunsaturated fatty acid saturation metabolism in Lactobacillus plantarum AKU 1009a.</title>
        <authorList>
            <person name="Takeuchi M."/>
            <person name="Kishino S."/>
            <person name="Hirata A."/>
            <person name="Park S.B."/>
            <person name="Kitamura N."/>
            <person name="Ogawa J."/>
        </authorList>
    </citation>
    <scope>FUNCTION</scope>
    <scope>CATALYTIC ACTIVITY</scope>
    <scope>ENANTIOPURITY OF THE PRODUCTS</scope>
    <scope>SUBSTRATE SPECIFICITY</scope>
    <scope>COFACTOR</scope>
    <scope>BIOPHYSICOCHEMICAL PROPERTIES</scope>
    <scope>ACTIVITY REGULATION</scope>
    <source>
        <strain>AKU 1009a</strain>
    </source>
</reference>
<evidence type="ECO:0000250" key="1">
    <source>
        <dbReference type="UniProtKB" id="C7DLJ6"/>
    </source>
</evidence>
<evidence type="ECO:0000269" key="2">
    <source>
    </source>
</evidence>
<evidence type="ECO:0000269" key="3">
    <source>
    </source>
</evidence>
<evidence type="ECO:0000269" key="4">
    <source>
    </source>
</evidence>
<evidence type="ECO:0000303" key="5">
    <source>
    </source>
</evidence>
<evidence type="ECO:0000303" key="6">
    <source>
    </source>
</evidence>
<evidence type="ECO:0000305" key="7"/>
<evidence type="ECO:0000305" key="8">
    <source>
    </source>
</evidence>
<evidence type="ECO:0000305" key="9">
    <source>
    </source>
</evidence>
<evidence type="ECO:0000312" key="10">
    <source>
        <dbReference type="EMBL" id="BAL42246.1"/>
    </source>
</evidence>
<keyword id="KW-1003">Cell membrane</keyword>
<keyword id="KW-0963">Cytoplasm</keyword>
<keyword id="KW-0216">Detoxification</keyword>
<keyword id="KW-0274">FAD</keyword>
<keyword id="KW-0276">Fatty acid metabolism</keyword>
<keyword id="KW-0285">Flavoprotein</keyword>
<keyword id="KW-0443">Lipid metabolism</keyword>
<keyword id="KW-0456">Lyase</keyword>
<keyword id="KW-0472">Membrane</keyword>
<accession>G9MAP1</accession>
<protein>
    <recommendedName>
        <fullName evidence="8 9">Linoleate hydratase</fullName>
        <ecNumber evidence="3 4">4.2.1.-</ecNumber>
    </recommendedName>
    <alternativeName>
        <fullName evidence="8 9">CLA biosynthesis hydratase</fullName>
        <shortName evidence="5">CLA-HY</shortName>
    </alternativeName>
    <alternativeName>
        <fullName evidence="8 9">Fatty acid double bond hydratase/dehydratase</fullName>
    </alternativeName>
    <alternativeName>
        <fullName evidence="6">Linoleic acid Delta9 hydratase</fullName>
    </alternativeName>
</protein>
<dbReference type="EC" id="4.2.1.-" evidence="3 4"/>
<dbReference type="EMBL" id="AB671229">
    <property type="protein sequence ID" value="BAL42246.1"/>
    <property type="molecule type" value="Genomic_DNA"/>
</dbReference>
<dbReference type="SMR" id="G9MAP1"/>
<dbReference type="UniPathway" id="UPA00199"/>
<dbReference type="GO" id="GO:0005737">
    <property type="term" value="C:cytoplasm"/>
    <property type="evidence" value="ECO:0007669"/>
    <property type="project" value="UniProtKB-SubCell"/>
</dbReference>
<dbReference type="GO" id="GO:0005886">
    <property type="term" value="C:plasma membrane"/>
    <property type="evidence" value="ECO:0007669"/>
    <property type="project" value="UniProtKB-SubCell"/>
</dbReference>
<dbReference type="GO" id="GO:0071949">
    <property type="term" value="F:FAD binding"/>
    <property type="evidence" value="ECO:0007669"/>
    <property type="project" value="InterPro"/>
</dbReference>
<dbReference type="GO" id="GO:0050151">
    <property type="term" value="F:oleate hydratase activity"/>
    <property type="evidence" value="ECO:0007669"/>
    <property type="project" value="InterPro"/>
</dbReference>
<dbReference type="GO" id="GO:0006631">
    <property type="term" value="P:fatty acid metabolic process"/>
    <property type="evidence" value="ECO:0007669"/>
    <property type="project" value="UniProtKB-UniPathway"/>
</dbReference>
<dbReference type="GO" id="GO:0009636">
    <property type="term" value="P:response to toxic substance"/>
    <property type="evidence" value="ECO:0007669"/>
    <property type="project" value="UniProtKB-KW"/>
</dbReference>
<dbReference type="Gene3D" id="3.50.50.60">
    <property type="entry name" value="FAD/NAD(P)-binding domain"/>
    <property type="match status" value="3"/>
</dbReference>
<dbReference type="InterPro" id="IPR036188">
    <property type="entry name" value="FAD/NAD-bd_sf"/>
</dbReference>
<dbReference type="InterPro" id="IPR010354">
    <property type="entry name" value="Oleate_hydratase"/>
</dbReference>
<dbReference type="NCBIfam" id="NF010584">
    <property type="entry name" value="PRK13977.1"/>
    <property type="match status" value="1"/>
</dbReference>
<dbReference type="PANTHER" id="PTHR37417">
    <property type="entry name" value="67 KDA MYOSIN-CROSS-REACTIVE ANTIGEN FAMILY PROTEIN (AFU_ORTHOLOGUE AFUA_5G09970)"/>
    <property type="match status" value="1"/>
</dbReference>
<dbReference type="PANTHER" id="PTHR37417:SF2">
    <property type="entry name" value="67 KDA MYOSIN-CROSS-REACTIVE ANTIGEN FAMILY PROTEIN (AFU_ORTHOLOGUE AFUA_5G09970)"/>
    <property type="match status" value="1"/>
</dbReference>
<dbReference type="Pfam" id="PF06100">
    <property type="entry name" value="MCRA"/>
    <property type="match status" value="1"/>
</dbReference>
<dbReference type="SUPFAM" id="SSF51905">
    <property type="entry name" value="FAD/NAD(P)-binding domain"/>
    <property type="match status" value="1"/>
</dbReference>
<sequence>MGALFMVKSKAIMIGAGLSNMAAAVYLIQDGHWDGKDITFYGVDMHGANDGGATTDFTNEYWNKNHPMANTTGYVARGGRMLNYRTYVDLMDLLDRIPSVTEPGMTAAEDTRDFDAKHRTYDIARLMQGGKGIINAGKLGFNNKDRTLLTKLIMMPDSEETKLDNVSIAEYFKDDPHMFQTNFWYMWETTFAFRTQSSAQELRRYMHQMIYEFTQIEHLVGVNRTRYNQFESMILPLIKYLQGQGVTFIDNKIVKDWQFKDTPMQDEITVTGLVIEDAQTGETEEVEVDEDTAVIFTNGSITDSATMGDYNTPAPENMDYGVSASLWKKATERFYNLGTPDKFFNDRNASEWVSFTLTTKNHLFLNEIVRITTQEPGNALNSFLSTTPITPLNQKDVNMSIVVHHQPHFTTQQPNETVLWGYFLYPRRQGEFVNKPYIKMTGKEMAQELIGQLSKVDPGPGNIKDKEKENLDSIVNNIPVYMPYASALFNNRAKSDRPEVLPKHSTNLAFTGEFAEQPYQMIFTEQSAVRSGEIAAYHFAGVPMDNLVKTPRYDKDPKTLLKATKKMFD</sequence>
<proteinExistence type="evidence at protein level"/>
<organism>
    <name type="scientific">Lactiplantibacillus plantarum</name>
    <name type="common">Lactobacillus plantarum</name>
    <dbReference type="NCBI Taxonomy" id="1590"/>
    <lineage>
        <taxon>Bacteria</taxon>
        <taxon>Bacillati</taxon>
        <taxon>Bacillota</taxon>
        <taxon>Bacilli</taxon>
        <taxon>Lactobacillales</taxon>
        <taxon>Lactobacillaceae</taxon>
        <taxon>Lactiplantibacillus</taxon>
    </lineage>
</organism>
<comment type="function">
    <text evidence="2 3 4">Is involved in a saturation metabolic pathway of polyunsaturated fatty acids, that detoxifies unsaturated fatty acids and generates hydroxy fatty acids, oxo fatty acids, conjugated fatty acids such as conjugated linoleic acids (CLAs), and partially saturated trans-fatty acids as intermediates. CLA-HY catalyzes the hydration and dehydration steps in the production of 10-hydroxy-cis-12-octadecenoate, trans-10,cis-12-CLA, cis-9,trans-11-CLA, trans-9,trans-11-CLA, oleate and trans-10-octadecenoate during linoleate metabolism (PubMed:22093837, PubMed:24127592, PubMed:25476761). Is also able to hydrate palmitoleic acid (cis-9-hexadecenoic acid), oleic acid, alpha-linolenic acid, gamma-linolenic acid, and stearidonic acid into the corresponding 10-hydroxy fatty acids, and dehydrate 10-hydroxy-cis-12,cis-15-octadecadienoic acid, 10-hydroxy-cis-6,cis-12-octadecadienoic acid, and 10-hydroxyoctadecanoic acid into the corresponding fatty acids with cis double bonds at the Delta9 position (PubMed:25476761). As part of the gut microbiome, this enzyme modifies host fatty acid composition and is expected to improve human health by altering lipid metabolism related to the onset of metabolic syndrome (PubMed:24127592). Shows regioselectivity for Delta9 double bond hydration, generating C10 hydroxy groups in the (S)-configuration with high enantioselectivity, when another double bond is in position 12. Is not able to hydrate fatty acids with a trans carbon-carbon double bond at Delta9 position (elaidic acid, trans-9-octadecenoic acid), fatty acid esters (methyl linoleate, monolinolein, dilinolein, and trilinolein), and conjugated fatty acids (conjugated linoleic acids), as well as fatty acids with other chain lengths, such as myristoleic acid (cis-9-tetradecenoic acid), arachidonic acid (cis-5,cis-8,cis-11,cis-14-eicosatetraenoic acid), EPA (cis-5,cis-8,cis-11,cis-14,cis-17-eicosapentaenoic acid), DHA (cis-4,cis-7,cis-10,cis-13,cis-16,cis-19-docosahexaenoic acid) and fatty acids with a cis carbon-carbon double bond at Delta11 position, such as cis-vaccenic acid and cis-11-octadecenoic acid, or fatty alcohols, such as linoleyl alcohol. Is not able to dehydrate 12-hydroxy, 3-hydroxy, and 9-hydroxy fatty acids (PubMed:25476761).</text>
</comment>
<comment type="catalytic activity">
    <reaction evidence="3 4">
        <text>(9Z,12Z)-octadecadienoate + H2O = (10S)-hydroxy-(12Z)-octadecenoate</text>
        <dbReference type="Rhea" id="RHEA:75723"/>
        <dbReference type="ChEBI" id="CHEBI:15377"/>
        <dbReference type="ChEBI" id="CHEBI:30245"/>
        <dbReference type="ChEBI" id="CHEBI:194434"/>
    </reaction>
    <physiologicalReaction direction="left-to-right" evidence="3 9">
        <dbReference type="Rhea" id="RHEA:75724"/>
    </physiologicalReaction>
    <physiologicalReaction direction="right-to-left" evidence="3 9">
        <dbReference type="Rhea" id="RHEA:75725"/>
    </physiologicalReaction>
</comment>
<comment type="catalytic activity">
    <reaction evidence="3">
        <text>(10E,12Z)-octadecadienoate + H2O = (10S)-hydroxy-(12Z)-octadecenoate</text>
        <dbReference type="Rhea" id="RHEA:75727"/>
        <dbReference type="ChEBI" id="CHEBI:15377"/>
        <dbReference type="ChEBI" id="CHEBI:77200"/>
        <dbReference type="ChEBI" id="CHEBI:194434"/>
    </reaction>
    <physiologicalReaction direction="right-to-left" evidence="3">
        <dbReference type="Rhea" id="RHEA:75729"/>
    </physiologicalReaction>
</comment>
<comment type="catalytic activity">
    <reaction evidence="3 9">
        <text>(9Z)-octadecenoate + H2O = 10-hydroxyoctadecanoate</text>
        <dbReference type="Rhea" id="RHEA:75751"/>
        <dbReference type="ChEBI" id="CHEBI:15377"/>
        <dbReference type="ChEBI" id="CHEBI:30823"/>
        <dbReference type="ChEBI" id="CHEBI:143089"/>
    </reaction>
    <physiologicalReaction direction="right-to-left" evidence="3 9">
        <dbReference type="Rhea" id="RHEA:75753"/>
    </physiologicalReaction>
</comment>
<comment type="catalytic activity">
    <reaction evidence="3">
        <text>(10E)-octadecenoate + H2O = 10-hydroxyoctadecanoate</text>
        <dbReference type="Rhea" id="RHEA:75755"/>
        <dbReference type="ChEBI" id="CHEBI:15377"/>
        <dbReference type="ChEBI" id="CHEBI:143089"/>
        <dbReference type="ChEBI" id="CHEBI:194438"/>
    </reaction>
    <physiologicalReaction direction="right-to-left" evidence="3">
        <dbReference type="Rhea" id="RHEA:75757"/>
    </physiologicalReaction>
</comment>
<comment type="catalytic activity">
    <reaction evidence="3">
        <text>(9E,11E)-octadecadienoate + H2O = 10-hydroxy-(11E)-octadecenoate</text>
        <dbReference type="Rhea" id="RHEA:75763"/>
        <dbReference type="ChEBI" id="CHEBI:15377"/>
        <dbReference type="ChEBI" id="CHEBI:194439"/>
        <dbReference type="ChEBI" id="CHEBI:194440"/>
    </reaction>
    <physiologicalReaction direction="right-to-left" evidence="3">
        <dbReference type="Rhea" id="RHEA:75765"/>
    </physiologicalReaction>
</comment>
<comment type="catalytic activity">
    <reaction evidence="3">
        <text>(9Z,11E)-octadecadienoate + H2O = 10-hydroxy-(11E)-octadecenoate</text>
        <dbReference type="Rhea" id="RHEA:75759"/>
        <dbReference type="ChEBI" id="CHEBI:15377"/>
        <dbReference type="ChEBI" id="CHEBI:17539"/>
        <dbReference type="ChEBI" id="CHEBI:194439"/>
    </reaction>
    <physiologicalReaction direction="right-to-left" evidence="3">
        <dbReference type="Rhea" id="RHEA:75761"/>
    </physiologicalReaction>
</comment>
<comment type="catalytic activity">
    <reaction evidence="4">
        <text>(9Z)-hexadecenoate + H2O = 10-hydroxyhexadecanoate</text>
        <dbReference type="Rhea" id="RHEA:75767"/>
        <dbReference type="ChEBI" id="CHEBI:15377"/>
        <dbReference type="ChEBI" id="CHEBI:32372"/>
        <dbReference type="ChEBI" id="CHEBI:194446"/>
    </reaction>
    <physiologicalReaction direction="left-to-right" evidence="9">
        <dbReference type="Rhea" id="RHEA:75768"/>
    </physiologicalReaction>
</comment>
<comment type="catalytic activity">
    <reaction evidence="4">
        <text>(9Z,12Z,15Z)-octadecatrienoate + H2O = (10S)-hydroxy-(12Z,15Z)-octadecadienoate</text>
        <dbReference type="Rhea" id="RHEA:75771"/>
        <dbReference type="ChEBI" id="CHEBI:15377"/>
        <dbReference type="ChEBI" id="CHEBI:32387"/>
        <dbReference type="ChEBI" id="CHEBI:194447"/>
    </reaction>
    <physiologicalReaction direction="left-to-right" evidence="9">
        <dbReference type="Rhea" id="RHEA:75772"/>
    </physiologicalReaction>
    <physiologicalReaction direction="right-to-left" evidence="9">
        <dbReference type="Rhea" id="RHEA:75773"/>
    </physiologicalReaction>
</comment>
<comment type="catalytic activity">
    <reaction evidence="4">
        <text>(6Z,9Z,12Z)-octadecatrienoate + H2O = (10S)-hydroxy-(6Z,12Z)-octadecadienoate</text>
        <dbReference type="Rhea" id="RHEA:75775"/>
        <dbReference type="ChEBI" id="CHEBI:15377"/>
        <dbReference type="ChEBI" id="CHEBI:32391"/>
        <dbReference type="ChEBI" id="CHEBI:194448"/>
    </reaction>
    <physiologicalReaction direction="left-to-right" evidence="9">
        <dbReference type="Rhea" id="RHEA:75776"/>
    </physiologicalReaction>
    <physiologicalReaction direction="right-to-left" evidence="9">
        <dbReference type="Rhea" id="RHEA:75777"/>
    </physiologicalReaction>
</comment>
<comment type="catalytic activity">
    <reaction evidence="4">
        <text>(6Z,9Z,12Z,15Z)-octadecatetraenoate + H2O = (10S)-hydroxy-(6Z,12Z,15Z)-octadecatrienoate</text>
        <dbReference type="Rhea" id="RHEA:75779"/>
        <dbReference type="ChEBI" id="CHEBI:15377"/>
        <dbReference type="ChEBI" id="CHEBI:77222"/>
        <dbReference type="ChEBI" id="CHEBI:194449"/>
    </reaction>
    <physiologicalReaction direction="left-to-right" evidence="9">
        <dbReference type="Rhea" id="RHEA:75780"/>
    </physiologicalReaction>
</comment>
<comment type="cofactor">
    <cofactor evidence="4">
        <name>FAD</name>
        <dbReference type="ChEBI" id="CHEBI:57692"/>
    </cofactor>
    <text evidence="4">FADH2 seems to be the active cofactor and is produced through the reduction of FAD by NADH.</text>
</comment>
<comment type="activity regulation">
    <text evidence="4">The addition of NADH or NADPH highly increases catalytic activity, likely by reducing the cofactor FAD to FADH2. The hydration and dehydration reactions are strongly inhibited by Ag(+), Fe(2+), Cu(2+), Zn(2+), Hg(2+), and Fe(3+).</text>
</comment>
<comment type="biophysicochemical properties">
    <kinetics>
        <KM evidence="4">92 uM for linoleate</KM>
        <KM evidence="4">98 uM for 10-hydroxy-cis-12-octadecenoate</KM>
        <text evidence="4">kcat is 0.026 sec(-1) for the hydration of linoleate. kcat is 0.0012 sec(-1) for the dehydration of 10-hydroxy-cis-12-octadecenoate.</text>
    </kinetics>
    <phDependence>
        <text>Optimum pH is 5.5 for the hydration of linoleic acid and for the dehydration of 10-hydroxy-cis-12-octadecenoic acid (HYA).</text>
    </phDependence>
    <temperatureDependence>
        <text evidence="4">Optimum temperature is 42 degrees Celsius for the hydration of linoleic acid and 37 degrees Celsius for the dehydration of 10-hydroxy-cis-12-octadecenoic acid (HYA).</text>
    </temperatureDependence>
</comment>
<comment type="pathway">
    <text evidence="2 3">Lipid metabolism; fatty acid metabolism.</text>
</comment>
<comment type="subcellular location">
    <subcellularLocation>
        <location evidence="2">Cell membrane</location>
    </subcellularLocation>
    <subcellularLocation>
        <location evidence="2">Cytoplasm</location>
    </subcellularLocation>
    <text evidence="2">Is not strongly linked to the membrane because this enzyme is also present in the soluble cell-free extracts.</text>
</comment>
<comment type="similarity">
    <text evidence="7">Belongs to the oleate hydratase family.</text>
</comment>
<name>CLAHY_LACPN</name>